<evidence type="ECO:0000255" key="1">
    <source>
        <dbReference type="HAMAP-Rule" id="MF_00344"/>
    </source>
</evidence>
<sequence>MQNNVLILDFGSQYTQLIARRVRELNIYCEIYPYHKIPEDLSGFKAVILSGSPFSVRAEDAPHPDLSQIRGKLPILAVCYGAQYFAHFHGGKVEPSDTREYGRANLTVIKDAEPLFENIKENSQVWMSHSDSIIRLPENGVRLASTSDVLNAAYRIEGEQTFAIQFHPEVYHSTDGKQLLENFLIKIAGTKATWTPGKFVDLTVSELKEKVGDDKVVLGLSGGVDSTVAAVLLHKAIGKNLYCIFVNNGLLRKNEFESVLDQYKDMGLNVKGVDASARFLDALKGLSDPEEKRKAIGNTFIEVFDDEAHEIKDVVYLAQGTIYPDVIESVSVNGPSVTIKSHHNVGGLPDFMKLKIVEPLRMLFKDEVRRVGKELGIDKELLGRHPFPGPGLAIRILGDITEEKVRILQEVDHIFIQGLRDWMLYDKVWQAGAILLPIQSVGVMGDERTYEQVVALRAVESTDGMTADWVNLPYEFLQKTSNTIINRVKGVNRVVYDISSKPPATIEWE</sequence>
<accession>A0M3J8</accession>
<keyword id="KW-0067">ATP-binding</keyword>
<keyword id="KW-0315">Glutamine amidotransferase</keyword>
<keyword id="KW-0332">GMP biosynthesis</keyword>
<keyword id="KW-0436">Ligase</keyword>
<keyword id="KW-0547">Nucleotide-binding</keyword>
<keyword id="KW-0658">Purine biosynthesis</keyword>
<gene>
    <name evidence="1" type="primary">guaA</name>
    <name type="ordered locus">GFO_2228</name>
</gene>
<reference key="1">
    <citation type="journal article" date="2006" name="Environ. Microbiol.">
        <title>Whole genome analysis of the marine Bacteroidetes'Gramella forsetii' reveals adaptations to degradation of polymeric organic matter.</title>
        <authorList>
            <person name="Bauer M."/>
            <person name="Kube M."/>
            <person name="Teeling H."/>
            <person name="Richter M."/>
            <person name="Lombardot T."/>
            <person name="Allers E."/>
            <person name="Wuerdemann C.A."/>
            <person name="Quast C."/>
            <person name="Kuhl H."/>
            <person name="Knaust F."/>
            <person name="Woebken D."/>
            <person name="Bischof K."/>
            <person name="Mussmann M."/>
            <person name="Choudhuri J.V."/>
            <person name="Meyer F."/>
            <person name="Reinhardt R."/>
            <person name="Amann R.I."/>
            <person name="Gloeckner F.O."/>
        </authorList>
    </citation>
    <scope>NUCLEOTIDE SEQUENCE [LARGE SCALE GENOMIC DNA]</scope>
    <source>
        <strain>DSM 17595 / CGMCC 1.15422 / KT0803</strain>
    </source>
</reference>
<organism>
    <name type="scientific">Christiangramia forsetii (strain DSM 17595 / CGMCC 1.15422 / KT0803)</name>
    <name type="common">Gramella forsetii</name>
    <dbReference type="NCBI Taxonomy" id="411154"/>
    <lineage>
        <taxon>Bacteria</taxon>
        <taxon>Pseudomonadati</taxon>
        <taxon>Bacteroidota</taxon>
        <taxon>Flavobacteriia</taxon>
        <taxon>Flavobacteriales</taxon>
        <taxon>Flavobacteriaceae</taxon>
        <taxon>Christiangramia</taxon>
    </lineage>
</organism>
<name>GUAA_CHRFK</name>
<proteinExistence type="inferred from homology"/>
<feature type="chain" id="PRO_1000120308" description="GMP synthase [glutamine-hydrolyzing]">
    <location>
        <begin position="1"/>
        <end position="509"/>
    </location>
</feature>
<feature type="domain" description="Glutamine amidotransferase type-1" evidence="1">
    <location>
        <begin position="4"/>
        <end position="193"/>
    </location>
</feature>
<feature type="domain" description="GMPS ATP-PPase" evidence="1">
    <location>
        <begin position="194"/>
        <end position="384"/>
    </location>
</feature>
<feature type="active site" description="Nucleophile" evidence="1">
    <location>
        <position position="79"/>
    </location>
</feature>
<feature type="active site" evidence="1">
    <location>
        <position position="167"/>
    </location>
</feature>
<feature type="active site" evidence="1">
    <location>
        <position position="169"/>
    </location>
</feature>
<feature type="binding site" evidence="1">
    <location>
        <begin position="221"/>
        <end position="227"/>
    </location>
    <ligand>
        <name>ATP</name>
        <dbReference type="ChEBI" id="CHEBI:30616"/>
    </ligand>
</feature>
<protein>
    <recommendedName>
        <fullName evidence="1">GMP synthase [glutamine-hydrolyzing]</fullName>
        <ecNumber evidence="1">6.3.5.2</ecNumber>
    </recommendedName>
    <alternativeName>
        <fullName evidence="1">GMP synthetase</fullName>
    </alternativeName>
    <alternativeName>
        <fullName evidence="1">Glutamine amidotransferase</fullName>
    </alternativeName>
</protein>
<dbReference type="EC" id="6.3.5.2" evidence="1"/>
<dbReference type="EMBL" id="CU207366">
    <property type="protein sequence ID" value="CAL67193.1"/>
    <property type="molecule type" value="Genomic_DNA"/>
</dbReference>
<dbReference type="RefSeq" id="WP_011710096.1">
    <property type="nucleotide sequence ID" value="NC_008571.1"/>
</dbReference>
<dbReference type="SMR" id="A0M3J8"/>
<dbReference type="STRING" id="411154.GFO_2228"/>
<dbReference type="MEROPS" id="C26.957"/>
<dbReference type="KEGG" id="gfo:GFO_2228"/>
<dbReference type="eggNOG" id="COG0518">
    <property type="taxonomic scope" value="Bacteria"/>
</dbReference>
<dbReference type="eggNOG" id="COG0519">
    <property type="taxonomic scope" value="Bacteria"/>
</dbReference>
<dbReference type="HOGENOM" id="CLU_014340_0_5_10"/>
<dbReference type="OrthoDB" id="9802219at2"/>
<dbReference type="UniPathway" id="UPA00189">
    <property type="reaction ID" value="UER00296"/>
</dbReference>
<dbReference type="Proteomes" id="UP000000755">
    <property type="component" value="Chromosome"/>
</dbReference>
<dbReference type="GO" id="GO:0005829">
    <property type="term" value="C:cytosol"/>
    <property type="evidence" value="ECO:0007669"/>
    <property type="project" value="TreeGrafter"/>
</dbReference>
<dbReference type="GO" id="GO:0005524">
    <property type="term" value="F:ATP binding"/>
    <property type="evidence" value="ECO:0007669"/>
    <property type="project" value="UniProtKB-UniRule"/>
</dbReference>
<dbReference type="GO" id="GO:0003921">
    <property type="term" value="F:GMP synthase activity"/>
    <property type="evidence" value="ECO:0007669"/>
    <property type="project" value="InterPro"/>
</dbReference>
<dbReference type="CDD" id="cd01742">
    <property type="entry name" value="GATase1_GMP_Synthase"/>
    <property type="match status" value="1"/>
</dbReference>
<dbReference type="CDD" id="cd01997">
    <property type="entry name" value="GMP_synthase_C"/>
    <property type="match status" value="1"/>
</dbReference>
<dbReference type="FunFam" id="3.30.300.10:FF:000002">
    <property type="entry name" value="GMP synthase [glutamine-hydrolyzing]"/>
    <property type="match status" value="1"/>
</dbReference>
<dbReference type="FunFam" id="3.40.50.620:FF:000001">
    <property type="entry name" value="GMP synthase [glutamine-hydrolyzing]"/>
    <property type="match status" value="1"/>
</dbReference>
<dbReference type="FunFam" id="3.40.50.880:FF:000001">
    <property type="entry name" value="GMP synthase [glutamine-hydrolyzing]"/>
    <property type="match status" value="1"/>
</dbReference>
<dbReference type="Gene3D" id="3.30.300.10">
    <property type="match status" value="1"/>
</dbReference>
<dbReference type="Gene3D" id="3.40.50.880">
    <property type="match status" value="1"/>
</dbReference>
<dbReference type="Gene3D" id="3.40.50.620">
    <property type="entry name" value="HUPs"/>
    <property type="match status" value="1"/>
</dbReference>
<dbReference type="HAMAP" id="MF_00344">
    <property type="entry name" value="GMP_synthase"/>
    <property type="match status" value="1"/>
</dbReference>
<dbReference type="InterPro" id="IPR029062">
    <property type="entry name" value="Class_I_gatase-like"/>
</dbReference>
<dbReference type="InterPro" id="IPR017926">
    <property type="entry name" value="GATASE"/>
</dbReference>
<dbReference type="InterPro" id="IPR001674">
    <property type="entry name" value="GMP_synth_C"/>
</dbReference>
<dbReference type="InterPro" id="IPR004739">
    <property type="entry name" value="GMP_synth_GATase"/>
</dbReference>
<dbReference type="InterPro" id="IPR022955">
    <property type="entry name" value="GMP_synthase"/>
</dbReference>
<dbReference type="InterPro" id="IPR025777">
    <property type="entry name" value="GMPS_ATP_PPase_dom"/>
</dbReference>
<dbReference type="InterPro" id="IPR022310">
    <property type="entry name" value="NAD/GMP_synthase"/>
</dbReference>
<dbReference type="InterPro" id="IPR014729">
    <property type="entry name" value="Rossmann-like_a/b/a_fold"/>
</dbReference>
<dbReference type="NCBIfam" id="TIGR00884">
    <property type="entry name" value="guaA_Cterm"/>
    <property type="match status" value="1"/>
</dbReference>
<dbReference type="NCBIfam" id="TIGR00888">
    <property type="entry name" value="guaA_Nterm"/>
    <property type="match status" value="1"/>
</dbReference>
<dbReference type="NCBIfam" id="NF000848">
    <property type="entry name" value="PRK00074.1"/>
    <property type="match status" value="1"/>
</dbReference>
<dbReference type="PANTHER" id="PTHR11922:SF2">
    <property type="entry name" value="GMP SYNTHASE [GLUTAMINE-HYDROLYZING]"/>
    <property type="match status" value="1"/>
</dbReference>
<dbReference type="PANTHER" id="PTHR11922">
    <property type="entry name" value="GMP SYNTHASE-RELATED"/>
    <property type="match status" value="1"/>
</dbReference>
<dbReference type="Pfam" id="PF00117">
    <property type="entry name" value="GATase"/>
    <property type="match status" value="1"/>
</dbReference>
<dbReference type="Pfam" id="PF00958">
    <property type="entry name" value="GMP_synt_C"/>
    <property type="match status" value="1"/>
</dbReference>
<dbReference type="Pfam" id="PF02540">
    <property type="entry name" value="NAD_synthase"/>
    <property type="match status" value="1"/>
</dbReference>
<dbReference type="SUPFAM" id="SSF52402">
    <property type="entry name" value="Adenine nucleotide alpha hydrolases-like"/>
    <property type="match status" value="1"/>
</dbReference>
<dbReference type="SUPFAM" id="SSF52317">
    <property type="entry name" value="Class I glutamine amidotransferase-like"/>
    <property type="match status" value="1"/>
</dbReference>
<dbReference type="SUPFAM" id="SSF54810">
    <property type="entry name" value="GMP synthetase C-terminal dimerisation domain"/>
    <property type="match status" value="1"/>
</dbReference>
<dbReference type="PROSITE" id="PS51273">
    <property type="entry name" value="GATASE_TYPE_1"/>
    <property type="match status" value="1"/>
</dbReference>
<dbReference type="PROSITE" id="PS51553">
    <property type="entry name" value="GMPS_ATP_PPASE"/>
    <property type="match status" value="1"/>
</dbReference>
<comment type="function">
    <text evidence="1">Catalyzes the synthesis of GMP from XMP.</text>
</comment>
<comment type="catalytic activity">
    <reaction evidence="1">
        <text>XMP + L-glutamine + ATP + H2O = GMP + L-glutamate + AMP + diphosphate + 2 H(+)</text>
        <dbReference type="Rhea" id="RHEA:11680"/>
        <dbReference type="ChEBI" id="CHEBI:15377"/>
        <dbReference type="ChEBI" id="CHEBI:15378"/>
        <dbReference type="ChEBI" id="CHEBI:29985"/>
        <dbReference type="ChEBI" id="CHEBI:30616"/>
        <dbReference type="ChEBI" id="CHEBI:33019"/>
        <dbReference type="ChEBI" id="CHEBI:57464"/>
        <dbReference type="ChEBI" id="CHEBI:58115"/>
        <dbReference type="ChEBI" id="CHEBI:58359"/>
        <dbReference type="ChEBI" id="CHEBI:456215"/>
        <dbReference type="EC" id="6.3.5.2"/>
    </reaction>
</comment>
<comment type="pathway">
    <text evidence="1">Purine metabolism; GMP biosynthesis; GMP from XMP (L-Gln route): step 1/1.</text>
</comment>
<comment type="subunit">
    <text evidence="1">Homodimer.</text>
</comment>